<feature type="chain" id="PRO_0000108470" description="Transcriptional regulator MraZ">
    <location>
        <begin position="1"/>
        <end position="142"/>
    </location>
</feature>
<feature type="domain" description="SpoVT-AbrB 1" evidence="2">
    <location>
        <begin position="5"/>
        <end position="47"/>
    </location>
</feature>
<feature type="domain" description="SpoVT-AbrB 2" evidence="2">
    <location>
        <begin position="76"/>
        <end position="119"/>
    </location>
</feature>
<protein>
    <recommendedName>
        <fullName>Transcriptional regulator MraZ</fullName>
    </recommendedName>
</protein>
<gene>
    <name evidence="1" type="primary">mraZ</name>
    <name type="ordered locus">CA_C2133</name>
</gene>
<organism>
    <name type="scientific">Clostridium acetobutylicum (strain ATCC 824 / DSM 792 / JCM 1419 / IAM 19013 / LMG 5710 / NBRC 13948 / NRRL B-527 / VKM B-1787 / 2291 / W)</name>
    <dbReference type="NCBI Taxonomy" id="272562"/>
    <lineage>
        <taxon>Bacteria</taxon>
        <taxon>Bacillati</taxon>
        <taxon>Bacillota</taxon>
        <taxon>Clostridia</taxon>
        <taxon>Eubacteriales</taxon>
        <taxon>Clostridiaceae</taxon>
        <taxon>Clostridium</taxon>
    </lineage>
</organism>
<comment type="subunit">
    <text evidence="1">Forms oligomers.</text>
</comment>
<comment type="subcellular location">
    <subcellularLocation>
        <location evidence="1">Cytoplasm</location>
        <location evidence="1">Nucleoid</location>
    </subcellularLocation>
</comment>
<comment type="similarity">
    <text evidence="1">Belongs to the MraZ family.</text>
</comment>
<reference key="1">
    <citation type="journal article" date="2001" name="J. Bacteriol.">
        <title>Genome sequence and comparative analysis of the solvent-producing bacterium Clostridium acetobutylicum.</title>
        <authorList>
            <person name="Noelling J."/>
            <person name="Breton G."/>
            <person name="Omelchenko M.V."/>
            <person name="Makarova K.S."/>
            <person name="Zeng Q."/>
            <person name="Gibson R."/>
            <person name="Lee H.M."/>
            <person name="Dubois J."/>
            <person name="Qiu D."/>
            <person name="Hitti J."/>
            <person name="Wolf Y.I."/>
            <person name="Tatusov R.L."/>
            <person name="Sabathe F."/>
            <person name="Doucette-Stamm L.A."/>
            <person name="Soucaille P."/>
            <person name="Daly M.J."/>
            <person name="Bennett G.N."/>
            <person name="Koonin E.V."/>
            <person name="Smith D.R."/>
        </authorList>
    </citation>
    <scope>NUCLEOTIDE SEQUENCE [LARGE SCALE GENOMIC DNA]</scope>
    <source>
        <strain>ATCC 824 / DSM 792 / JCM 1419 / IAM 19013 / LMG 5710 / NBRC 13948 / NRRL B-527 / VKM B-1787 / 2291 / W</strain>
    </source>
</reference>
<proteinExistence type="inferred from homology"/>
<dbReference type="EMBL" id="AE001437">
    <property type="protein sequence ID" value="AAK80091.1"/>
    <property type="molecule type" value="Genomic_DNA"/>
</dbReference>
<dbReference type="PIR" id="H97162">
    <property type="entry name" value="H97162"/>
</dbReference>
<dbReference type="RefSeq" id="NP_348751.1">
    <property type="nucleotide sequence ID" value="NC_003030.1"/>
</dbReference>
<dbReference type="RefSeq" id="WP_010965432.1">
    <property type="nucleotide sequence ID" value="NC_003030.1"/>
</dbReference>
<dbReference type="SMR" id="Q97H80"/>
<dbReference type="STRING" id="272562.CA_C2133"/>
<dbReference type="GeneID" id="44998614"/>
<dbReference type="KEGG" id="cac:CA_C2133"/>
<dbReference type="PATRIC" id="fig|272562.8.peg.2335"/>
<dbReference type="eggNOG" id="COG2001">
    <property type="taxonomic scope" value="Bacteria"/>
</dbReference>
<dbReference type="HOGENOM" id="CLU_107907_0_5_9"/>
<dbReference type="OrthoDB" id="9807753at2"/>
<dbReference type="Proteomes" id="UP000000814">
    <property type="component" value="Chromosome"/>
</dbReference>
<dbReference type="GO" id="GO:0005737">
    <property type="term" value="C:cytoplasm"/>
    <property type="evidence" value="ECO:0007669"/>
    <property type="project" value="UniProtKB-UniRule"/>
</dbReference>
<dbReference type="GO" id="GO:0009295">
    <property type="term" value="C:nucleoid"/>
    <property type="evidence" value="ECO:0007669"/>
    <property type="project" value="UniProtKB-SubCell"/>
</dbReference>
<dbReference type="GO" id="GO:0003700">
    <property type="term" value="F:DNA-binding transcription factor activity"/>
    <property type="evidence" value="ECO:0007669"/>
    <property type="project" value="UniProtKB-UniRule"/>
</dbReference>
<dbReference type="GO" id="GO:0000976">
    <property type="term" value="F:transcription cis-regulatory region binding"/>
    <property type="evidence" value="ECO:0007669"/>
    <property type="project" value="TreeGrafter"/>
</dbReference>
<dbReference type="GO" id="GO:2000143">
    <property type="term" value="P:negative regulation of DNA-templated transcription initiation"/>
    <property type="evidence" value="ECO:0007669"/>
    <property type="project" value="TreeGrafter"/>
</dbReference>
<dbReference type="CDD" id="cd16321">
    <property type="entry name" value="MraZ_C"/>
    <property type="match status" value="1"/>
</dbReference>
<dbReference type="CDD" id="cd16320">
    <property type="entry name" value="MraZ_N"/>
    <property type="match status" value="1"/>
</dbReference>
<dbReference type="FunFam" id="3.40.1550.20:FF:000002">
    <property type="entry name" value="Transcriptional regulator MraZ"/>
    <property type="match status" value="1"/>
</dbReference>
<dbReference type="Gene3D" id="3.40.1550.20">
    <property type="entry name" value="Transcriptional regulator MraZ domain"/>
    <property type="match status" value="1"/>
</dbReference>
<dbReference type="HAMAP" id="MF_01008">
    <property type="entry name" value="MraZ"/>
    <property type="match status" value="1"/>
</dbReference>
<dbReference type="InterPro" id="IPR003444">
    <property type="entry name" value="MraZ"/>
</dbReference>
<dbReference type="InterPro" id="IPR035644">
    <property type="entry name" value="MraZ_C"/>
</dbReference>
<dbReference type="InterPro" id="IPR020603">
    <property type="entry name" value="MraZ_dom"/>
</dbReference>
<dbReference type="InterPro" id="IPR035642">
    <property type="entry name" value="MraZ_N"/>
</dbReference>
<dbReference type="InterPro" id="IPR038619">
    <property type="entry name" value="MraZ_sf"/>
</dbReference>
<dbReference type="InterPro" id="IPR007159">
    <property type="entry name" value="SpoVT-AbrB_dom"/>
</dbReference>
<dbReference type="InterPro" id="IPR037914">
    <property type="entry name" value="SpoVT-AbrB_sf"/>
</dbReference>
<dbReference type="NCBIfam" id="TIGR00242">
    <property type="entry name" value="division/cell wall cluster transcriptional repressor MraZ"/>
    <property type="match status" value="1"/>
</dbReference>
<dbReference type="PANTHER" id="PTHR34701">
    <property type="entry name" value="TRANSCRIPTIONAL REGULATOR MRAZ"/>
    <property type="match status" value="1"/>
</dbReference>
<dbReference type="PANTHER" id="PTHR34701:SF1">
    <property type="entry name" value="TRANSCRIPTIONAL REGULATOR MRAZ"/>
    <property type="match status" value="1"/>
</dbReference>
<dbReference type="Pfam" id="PF02381">
    <property type="entry name" value="MraZ"/>
    <property type="match status" value="2"/>
</dbReference>
<dbReference type="SUPFAM" id="SSF89447">
    <property type="entry name" value="AbrB/MazE/MraZ-like"/>
    <property type="match status" value="1"/>
</dbReference>
<dbReference type="PROSITE" id="PS51740">
    <property type="entry name" value="SPOVT_ABRB"/>
    <property type="match status" value="2"/>
</dbReference>
<name>MRAZ_CLOAB</name>
<keyword id="KW-0963">Cytoplasm</keyword>
<keyword id="KW-0238">DNA-binding</keyword>
<keyword id="KW-1185">Reference proteome</keyword>
<keyword id="KW-0677">Repeat</keyword>
<keyword id="KW-0804">Transcription</keyword>
<keyword id="KW-0805">Transcription regulation</keyword>
<sequence length="142" mass="16314">MFIGEYNHALDTKNRIIIPSKFREELGDNFILTKGLDGCLYVYPLGEWKVLEEKLKKLPLTNHNARAFVRFFFSGANEVSLDKQGRVLVPQNLIEYASINKEIISIGVSTRIEIWSKEKWVEYNESSVDMNAIAEKMSELGI</sequence>
<accession>Q97H80</accession>
<evidence type="ECO:0000255" key="1">
    <source>
        <dbReference type="HAMAP-Rule" id="MF_01008"/>
    </source>
</evidence>
<evidence type="ECO:0000255" key="2">
    <source>
        <dbReference type="PROSITE-ProRule" id="PRU01076"/>
    </source>
</evidence>